<gene>
    <name evidence="5" type="primary">GNK1</name>
    <name evidence="4" type="synonym">GNL</name>
</gene>
<proteinExistence type="evidence at protein level"/>
<comment type="function">
    <text evidence="1 3">Possesses antifungal activity against B.cinerea, M.arachidicola, F.oxysporum, R.solani and C.comatus and moderate antibacterial activity against S.aureus, P.aeruginosa and E.coli. Inhibits HIV-1 reverse transcriptase and proliferation of murine splenocytes (PubMed:11118300). Exerts antifungal activity through its carbohydrate-binding specificity (By similarity).</text>
</comment>
<comment type="tissue specificity">
    <text evidence="3">Expressed in seeds (at the protein level).</text>
</comment>
<keyword id="KW-0044">Antibiotic</keyword>
<keyword id="KW-0929">Antimicrobial</keyword>
<keyword id="KW-0903">Direct protein sequencing</keyword>
<keyword id="KW-0295">Fungicide</keyword>
<keyword id="KW-0430">Lectin</keyword>
<keyword id="KW-0465">Mannose-binding</keyword>
<keyword id="KW-0611">Plant defense</keyword>
<organism>
    <name type="scientific">Ginkgo biloba</name>
    <name type="common">Ginkgo</name>
    <name type="synonym">Maidenhair tree</name>
    <dbReference type="NCBI Taxonomy" id="3311"/>
    <lineage>
        <taxon>Eukaryota</taxon>
        <taxon>Viridiplantae</taxon>
        <taxon>Streptophyta</taxon>
        <taxon>Embryophyta</taxon>
        <taxon>Tracheophyta</taxon>
        <taxon>Spermatophyta</taxon>
        <taxon>Ginkgoidae</taxon>
        <taxon>Ginkgoales</taxon>
        <taxon>Ginkgoaceae</taxon>
        <taxon>Ginkgo</taxon>
    </lineage>
</organism>
<reference key="1">
    <citation type="journal article" date="2000" name="Biochem. Biophys. Res. Commun.">
        <title>Ginkbilobin, a novel antifungal protein from Ginkgo biloba seeds with sequence similarity to embryo-abundant protein.</title>
        <authorList>
            <person name="Wang H."/>
            <person name="Ng T.B."/>
        </authorList>
    </citation>
    <scope>PROTEIN SEQUENCE</scope>
    <scope>FUNCTION</scope>
    <scope>TISSUE SPECIFICITY</scope>
    <source>
        <tissue>Seed</tissue>
    </source>
</reference>
<accession>P83171</accession>
<dbReference type="SMR" id="P83171"/>
<dbReference type="GO" id="GO:0005537">
    <property type="term" value="F:D-mannose binding"/>
    <property type="evidence" value="ECO:0007669"/>
    <property type="project" value="UniProtKB-KW"/>
</dbReference>
<dbReference type="GO" id="GO:0042742">
    <property type="term" value="P:defense response to bacterium"/>
    <property type="evidence" value="ECO:0000314"/>
    <property type="project" value="UniProtKB"/>
</dbReference>
<dbReference type="GO" id="GO:0050832">
    <property type="term" value="P:defense response to fungus"/>
    <property type="evidence" value="ECO:0000314"/>
    <property type="project" value="UniProtKB"/>
</dbReference>
<dbReference type="GO" id="GO:0031640">
    <property type="term" value="P:killing of cells of another organism"/>
    <property type="evidence" value="ECO:0007669"/>
    <property type="project" value="UniProtKB-KW"/>
</dbReference>
<dbReference type="GO" id="GO:0008285">
    <property type="term" value="P:negative regulation of cell population proliferation"/>
    <property type="evidence" value="ECO:0000304"/>
    <property type="project" value="UniProtKB"/>
</dbReference>
<feature type="chain" id="PRO_0000087499" description="Antifungal protein ginkbilobin-1">
    <location>
        <begin position="1"/>
        <end position="40" status="greater than"/>
    </location>
</feature>
<feature type="domain" description="Gnk2-homologous" evidence="2">
    <location>
        <begin position="3"/>
        <end position="40"/>
    </location>
</feature>
<feature type="binding site" evidence="1">
    <location>
        <position position="11"/>
    </location>
    <ligand>
        <name>alpha-D-mannopyranose</name>
        <dbReference type="ChEBI" id="CHEBI:28729"/>
    </ligand>
</feature>
<feature type="non-terminal residue" evidence="4">
    <location>
        <position position="40"/>
    </location>
</feature>
<evidence type="ECO:0000250" key="1">
    <source>
        <dbReference type="UniProtKB" id="A4ZDL6"/>
    </source>
</evidence>
<evidence type="ECO:0000255" key="2">
    <source>
        <dbReference type="PROSITE-ProRule" id="PRU00806"/>
    </source>
</evidence>
<evidence type="ECO:0000269" key="3">
    <source>
    </source>
</evidence>
<evidence type="ECO:0000303" key="4">
    <source>
    </source>
</evidence>
<evidence type="ECO:0000305" key="5"/>
<sequence length="40" mass="4214">ANTAFVSSAHNTQKIPAGAPFNRNLRAMLADLRQNAAFAG</sequence>
<name>GNK1_GINBI</name>
<protein>
    <recommendedName>
        <fullName evidence="5">Antifungal protein ginkbilobin-1</fullName>
    </recommendedName>
    <alternativeName>
        <fullName evidence="4">Ginkbilobin</fullName>
        <shortName evidence="4">GNL</shortName>
    </alternativeName>
</protein>